<dbReference type="EC" id="3.6.4.13" evidence="1"/>
<dbReference type="EMBL" id="CP000507">
    <property type="protein sequence ID" value="ABM01418.1"/>
    <property type="molecule type" value="Genomic_DNA"/>
</dbReference>
<dbReference type="RefSeq" id="WP_011761322.1">
    <property type="nucleotide sequence ID" value="NC_008700.1"/>
</dbReference>
<dbReference type="SMR" id="A1SAL1"/>
<dbReference type="STRING" id="326297.Sama_3215"/>
<dbReference type="KEGG" id="saz:Sama_3215"/>
<dbReference type="eggNOG" id="COG0513">
    <property type="taxonomic scope" value="Bacteria"/>
</dbReference>
<dbReference type="HOGENOM" id="CLU_003041_1_3_6"/>
<dbReference type="OrthoDB" id="9805696at2"/>
<dbReference type="Proteomes" id="UP000009175">
    <property type="component" value="Chromosome"/>
</dbReference>
<dbReference type="GO" id="GO:0005829">
    <property type="term" value="C:cytosol"/>
    <property type="evidence" value="ECO:0007669"/>
    <property type="project" value="TreeGrafter"/>
</dbReference>
<dbReference type="GO" id="GO:0005524">
    <property type="term" value="F:ATP binding"/>
    <property type="evidence" value="ECO:0007669"/>
    <property type="project" value="UniProtKB-UniRule"/>
</dbReference>
<dbReference type="GO" id="GO:0016887">
    <property type="term" value="F:ATP hydrolysis activity"/>
    <property type="evidence" value="ECO:0007669"/>
    <property type="project" value="RHEA"/>
</dbReference>
<dbReference type="GO" id="GO:0003723">
    <property type="term" value="F:RNA binding"/>
    <property type="evidence" value="ECO:0007669"/>
    <property type="project" value="UniProtKB-UniRule"/>
</dbReference>
<dbReference type="GO" id="GO:0003724">
    <property type="term" value="F:RNA helicase activity"/>
    <property type="evidence" value="ECO:0007669"/>
    <property type="project" value="UniProtKB-UniRule"/>
</dbReference>
<dbReference type="GO" id="GO:0006401">
    <property type="term" value="P:RNA catabolic process"/>
    <property type="evidence" value="ECO:0007669"/>
    <property type="project" value="UniProtKB-UniRule"/>
</dbReference>
<dbReference type="CDD" id="cd00268">
    <property type="entry name" value="DEADc"/>
    <property type="match status" value="1"/>
</dbReference>
<dbReference type="CDD" id="cd18787">
    <property type="entry name" value="SF2_C_DEAD"/>
    <property type="match status" value="1"/>
</dbReference>
<dbReference type="FunFam" id="3.40.50.300:FF:000312">
    <property type="entry name" value="ATP-dependent RNA helicase RhlB"/>
    <property type="match status" value="1"/>
</dbReference>
<dbReference type="Gene3D" id="3.40.50.300">
    <property type="entry name" value="P-loop containing nucleotide triphosphate hydrolases"/>
    <property type="match status" value="2"/>
</dbReference>
<dbReference type="HAMAP" id="MF_00661">
    <property type="entry name" value="DEAD_helicase_RhlB"/>
    <property type="match status" value="1"/>
</dbReference>
<dbReference type="InterPro" id="IPR011545">
    <property type="entry name" value="DEAD/DEAH_box_helicase_dom"/>
</dbReference>
<dbReference type="InterPro" id="IPR050079">
    <property type="entry name" value="DEAD_box_RNA_helicase"/>
</dbReference>
<dbReference type="InterPro" id="IPR014001">
    <property type="entry name" value="Helicase_ATP-bd"/>
</dbReference>
<dbReference type="InterPro" id="IPR001650">
    <property type="entry name" value="Helicase_C-like"/>
</dbReference>
<dbReference type="InterPro" id="IPR027417">
    <property type="entry name" value="P-loop_NTPase"/>
</dbReference>
<dbReference type="InterPro" id="IPR000629">
    <property type="entry name" value="RNA-helicase_DEAD-box_CS"/>
</dbReference>
<dbReference type="InterPro" id="IPR023554">
    <property type="entry name" value="RNA_helicase_ATP-dep_RhlB"/>
</dbReference>
<dbReference type="InterPro" id="IPR014014">
    <property type="entry name" value="RNA_helicase_DEAD_Q_motif"/>
</dbReference>
<dbReference type="NCBIfam" id="NF003419">
    <property type="entry name" value="PRK04837.1"/>
    <property type="match status" value="1"/>
</dbReference>
<dbReference type="PANTHER" id="PTHR47959:SF10">
    <property type="entry name" value="ATP-DEPENDENT RNA HELICASE RHLB"/>
    <property type="match status" value="1"/>
</dbReference>
<dbReference type="PANTHER" id="PTHR47959">
    <property type="entry name" value="ATP-DEPENDENT RNA HELICASE RHLE-RELATED"/>
    <property type="match status" value="1"/>
</dbReference>
<dbReference type="Pfam" id="PF00270">
    <property type="entry name" value="DEAD"/>
    <property type="match status" value="1"/>
</dbReference>
<dbReference type="Pfam" id="PF00271">
    <property type="entry name" value="Helicase_C"/>
    <property type="match status" value="1"/>
</dbReference>
<dbReference type="SMART" id="SM00487">
    <property type="entry name" value="DEXDc"/>
    <property type="match status" value="1"/>
</dbReference>
<dbReference type="SMART" id="SM00490">
    <property type="entry name" value="HELICc"/>
    <property type="match status" value="1"/>
</dbReference>
<dbReference type="SUPFAM" id="SSF52540">
    <property type="entry name" value="P-loop containing nucleoside triphosphate hydrolases"/>
    <property type="match status" value="1"/>
</dbReference>
<dbReference type="PROSITE" id="PS00039">
    <property type="entry name" value="DEAD_ATP_HELICASE"/>
    <property type="match status" value="1"/>
</dbReference>
<dbReference type="PROSITE" id="PS51192">
    <property type="entry name" value="HELICASE_ATP_BIND_1"/>
    <property type="match status" value="1"/>
</dbReference>
<dbReference type="PROSITE" id="PS51194">
    <property type="entry name" value="HELICASE_CTER"/>
    <property type="match status" value="1"/>
</dbReference>
<dbReference type="PROSITE" id="PS51195">
    <property type="entry name" value="Q_MOTIF"/>
    <property type="match status" value="1"/>
</dbReference>
<feature type="chain" id="PRO_1000082856" description="ATP-dependent RNA helicase RhlB">
    <location>
        <begin position="1"/>
        <end position="439"/>
    </location>
</feature>
<feature type="domain" description="Helicase ATP-binding" evidence="1">
    <location>
        <begin position="40"/>
        <end position="219"/>
    </location>
</feature>
<feature type="domain" description="Helicase C-terminal" evidence="1">
    <location>
        <begin position="243"/>
        <end position="390"/>
    </location>
</feature>
<feature type="region of interest" description="Disordered" evidence="2">
    <location>
        <begin position="394"/>
        <end position="439"/>
    </location>
</feature>
<feature type="short sequence motif" description="Q motif">
    <location>
        <begin position="9"/>
        <end position="37"/>
    </location>
</feature>
<feature type="short sequence motif" description="DEAD box">
    <location>
        <begin position="165"/>
        <end position="168"/>
    </location>
</feature>
<feature type="compositionally biased region" description="Low complexity" evidence="2">
    <location>
        <begin position="415"/>
        <end position="428"/>
    </location>
</feature>
<feature type="compositionally biased region" description="Basic residues" evidence="2">
    <location>
        <begin position="429"/>
        <end position="439"/>
    </location>
</feature>
<feature type="binding site" evidence="1">
    <location>
        <begin position="53"/>
        <end position="60"/>
    </location>
    <ligand>
        <name>ATP</name>
        <dbReference type="ChEBI" id="CHEBI:30616"/>
    </ligand>
</feature>
<organism>
    <name type="scientific">Shewanella amazonensis (strain ATCC BAA-1098 / SB2B)</name>
    <dbReference type="NCBI Taxonomy" id="326297"/>
    <lineage>
        <taxon>Bacteria</taxon>
        <taxon>Pseudomonadati</taxon>
        <taxon>Pseudomonadota</taxon>
        <taxon>Gammaproteobacteria</taxon>
        <taxon>Alteromonadales</taxon>
        <taxon>Shewanellaceae</taxon>
        <taxon>Shewanella</taxon>
    </lineage>
</organism>
<evidence type="ECO:0000255" key="1">
    <source>
        <dbReference type="HAMAP-Rule" id="MF_00661"/>
    </source>
</evidence>
<evidence type="ECO:0000256" key="2">
    <source>
        <dbReference type="SAM" id="MobiDB-lite"/>
    </source>
</evidence>
<sequence length="439" mass="49114">MSETHLTQQKFADLPLCDEVKQALNENGFEHCTPIQALSLPVLLEKKDIAGQAQTGTGKTLAFLVATFNHLLTTPVPEHRQLNQPRAIVMAPTRELAIQIAKDATLLSKHSGLKVGIVYGGEGYEAQRKVLDKGVDVLIGTTGRIIDYVRQGVINLGAIQAVVLDEADRMFDLGFIKDIRFLFNRMPGAKERLNMLFSATLSMKVQELAYDHMNDPVKVEIAPEEKTSRNIKEEIFYPSMEDKLKLLHSLIEEDWPEKAIVFANTKYQCENLWASLEADGHRVGLLTGDVPQKKRLKILEQFTQSELDILVATDVAARGLHISDVSHVYNYDLPDDCEDYVHRIGRTGRAGQKGVSVSFACEEYALNLPAIEDYIKHSIPVTSYDRDALIDIPPPVKIHRKPHAGGRNLRDRNGSPRPSGSHRSGSGRPPRHDRTRRHS</sequence>
<name>RHLB_SHEAM</name>
<comment type="function">
    <text evidence="1">DEAD-box RNA helicase involved in RNA degradation. Has RNA-dependent ATPase activity and unwinds double-stranded RNA.</text>
</comment>
<comment type="catalytic activity">
    <reaction evidence="1">
        <text>ATP + H2O = ADP + phosphate + H(+)</text>
        <dbReference type="Rhea" id="RHEA:13065"/>
        <dbReference type="ChEBI" id="CHEBI:15377"/>
        <dbReference type="ChEBI" id="CHEBI:15378"/>
        <dbReference type="ChEBI" id="CHEBI:30616"/>
        <dbReference type="ChEBI" id="CHEBI:43474"/>
        <dbReference type="ChEBI" id="CHEBI:456216"/>
        <dbReference type="EC" id="3.6.4.13"/>
    </reaction>
</comment>
<comment type="subunit">
    <text evidence="1">Component of the RNA degradosome, which is a multiprotein complex involved in RNA processing and mRNA degradation.</text>
</comment>
<comment type="subcellular location">
    <subcellularLocation>
        <location evidence="1">Cytoplasm</location>
    </subcellularLocation>
</comment>
<comment type="similarity">
    <text evidence="1">Belongs to the DEAD box helicase family. RhlB subfamily.</text>
</comment>
<accession>A1SAL1</accession>
<proteinExistence type="inferred from homology"/>
<reference key="1">
    <citation type="submission" date="2006-12" db="EMBL/GenBank/DDBJ databases">
        <title>Complete sequence of Shewanella amazonensis SB2B.</title>
        <authorList>
            <consortium name="US DOE Joint Genome Institute"/>
            <person name="Copeland A."/>
            <person name="Lucas S."/>
            <person name="Lapidus A."/>
            <person name="Barry K."/>
            <person name="Detter J.C."/>
            <person name="Glavina del Rio T."/>
            <person name="Hammon N."/>
            <person name="Israni S."/>
            <person name="Dalin E."/>
            <person name="Tice H."/>
            <person name="Pitluck S."/>
            <person name="Munk A.C."/>
            <person name="Brettin T."/>
            <person name="Bruce D."/>
            <person name="Han C."/>
            <person name="Tapia R."/>
            <person name="Gilna P."/>
            <person name="Schmutz J."/>
            <person name="Larimer F."/>
            <person name="Land M."/>
            <person name="Hauser L."/>
            <person name="Kyrpides N."/>
            <person name="Mikhailova N."/>
            <person name="Fredrickson J."/>
            <person name="Richardson P."/>
        </authorList>
    </citation>
    <scope>NUCLEOTIDE SEQUENCE [LARGE SCALE GENOMIC DNA]</scope>
    <source>
        <strain>ATCC BAA-1098 / SB2B</strain>
    </source>
</reference>
<protein>
    <recommendedName>
        <fullName evidence="1">ATP-dependent RNA helicase RhlB</fullName>
        <ecNumber evidence="1">3.6.4.13</ecNumber>
    </recommendedName>
</protein>
<gene>
    <name evidence="1" type="primary">rhlB</name>
    <name type="ordered locus">Sama_3215</name>
</gene>
<keyword id="KW-0067">ATP-binding</keyword>
<keyword id="KW-0963">Cytoplasm</keyword>
<keyword id="KW-0347">Helicase</keyword>
<keyword id="KW-0378">Hydrolase</keyword>
<keyword id="KW-0547">Nucleotide-binding</keyword>
<keyword id="KW-1185">Reference proteome</keyword>
<keyword id="KW-0694">RNA-binding</keyword>